<comment type="function">
    <text evidence="1">Promotes RNA polymerase assembly. Latches the N- and C-terminal regions of the beta' subunit thereby facilitating its interaction with the beta and alpha subunits.</text>
</comment>
<comment type="catalytic activity">
    <reaction evidence="1">
        <text>RNA(n) + a ribonucleoside 5'-triphosphate = RNA(n+1) + diphosphate</text>
        <dbReference type="Rhea" id="RHEA:21248"/>
        <dbReference type="Rhea" id="RHEA-COMP:14527"/>
        <dbReference type="Rhea" id="RHEA-COMP:17342"/>
        <dbReference type="ChEBI" id="CHEBI:33019"/>
        <dbReference type="ChEBI" id="CHEBI:61557"/>
        <dbReference type="ChEBI" id="CHEBI:140395"/>
        <dbReference type="EC" id="2.7.7.6"/>
    </reaction>
</comment>
<comment type="subunit">
    <text evidence="1">The RNAP catalytic core consists of 2 alpha, 1 beta, 1 beta' and 1 omega subunit. When a sigma factor is associated with the core the holoenzyme is formed, which can initiate transcription.</text>
</comment>
<comment type="similarity">
    <text evidence="1">Belongs to the RNA polymerase subunit omega family.</text>
</comment>
<accession>Q83EL6</accession>
<name>RPOZ_COXBU</name>
<sequence length="97" mass="10759">MARVTVEDCLEHVENRFDLVLKAAKRAHILELGGAEPMVPRDNDKPAVLALREIAAGYDVTREGQEQETEEVDVDRNVLAETAKMNKAVASQKESEV</sequence>
<protein>
    <recommendedName>
        <fullName evidence="1">DNA-directed RNA polymerase subunit omega</fullName>
        <shortName evidence="1">RNAP omega subunit</shortName>
        <ecNumber evidence="1">2.7.7.6</ecNumber>
    </recommendedName>
    <alternativeName>
        <fullName evidence="1">RNA polymerase omega subunit</fullName>
    </alternativeName>
    <alternativeName>
        <fullName evidence="1">Transcriptase subunit omega</fullName>
    </alternativeName>
</protein>
<proteinExistence type="inferred from homology"/>
<organism>
    <name type="scientific">Coxiella burnetii (strain RSA 493 / Nine Mile phase I)</name>
    <dbReference type="NCBI Taxonomy" id="227377"/>
    <lineage>
        <taxon>Bacteria</taxon>
        <taxon>Pseudomonadati</taxon>
        <taxon>Pseudomonadota</taxon>
        <taxon>Gammaproteobacteria</taxon>
        <taxon>Legionellales</taxon>
        <taxon>Coxiellaceae</taxon>
        <taxon>Coxiella</taxon>
    </lineage>
</organism>
<reference key="1">
    <citation type="journal article" date="2003" name="Proc. Natl. Acad. Sci. U.S.A.">
        <title>Complete genome sequence of the Q-fever pathogen, Coxiella burnetii.</title>
        <authorList>
            <person name="Seshadri R."/>
            <person name="Paulsen I.T."/>
            <person name="Eisen J.A."/>
            <person name="Read T.D."/>
            <person name="Nelson K.E."/>
            <person name="Nelson W.C."/>
            <person name="Ward N.L."/>
            <person name="Tettelin H."/>
            <person name="Davidsen T.M."/>
            <person name="Beanan M.J."/>
            <person name="DeBoy R.T."/>
            <person name="Daugherty S.C."/>
            <person name="Brinkac L.M."/>
            <person name="Madupu R."/>
            <person name="Dodson R.J."/>
            <person name="Khouri H.M."/>
            <person name="Lee K.H."/>
            <person name="Carty H.A."/>
            <person name="Scanlan D."/>
            <person name="Heinzen R.A."/>
            <person name="Thompson H.A."/>
            <person name="Samuel J.E."/>
            <person name="Fraser C.M."/>
            <person name="Heidelberg J.F."/>
        </authorList>
    </citation>
    <scope>NUCLEOTIDE SEQUENCE [LARGE SCALE GENOMIC DNA]</scope>
    <source>
        <strain>RSA 493 / Nine Mile phase I</strain>
    </source>
</reference>
<feature type="chain" id="PRO_0000128933" description="DNA-directed RNA polymerase subunit omega">
    <location>
        <begin position="1"/>
        <end position="97"/>
    </location>
</feature>
<dbReference type="EC" id="2.7.7.6" evidence="1"/>
<dbReference type="EMBL" id="AE016828">
    <property type="protein sequence ID" value="AAO89859.1"/>
    <property type="molecule type" value="Genomic_DNA"/>
</dbReference>
<dbReference type="RefSeq" id="NP_819345.1">
    <property type="nucleotide sequence ID" value="NC_002971.4"/>
</dbReference>
<dbReference type="RefSeq" id="WP_005771414.1">
    <property type="nucleotide sequence ID" value="NZ_CDBG01000001.1"/>
</dbReference>
<dbReference type="SMR" id="Q83EL6"/>
<dbReference type="STRING" id="227377.CBU_0302"/>
<dbReference type="EnsemblBacteria" id="AAO89859">
    <property type="protein sequence ID" value="AAO89859"/>
    <property type="gene ID" value="CBU_0302"/>
</dbReference>
<dbReference type="GeneID" id="1208184"/>
<dbReference type="KEGG" id="cbu:CBU_0302"/>
<dbReference type="PATRIC" id="fig|227377.7.peg.297"/>
<dbReference type="eggNOG" id="COG1758">
    <property type="taxonomic scope" value="Bacteria"/>
</dbReference>
<dbReference type="HOGENOM" id="CLU_125406_5_1_6"/>
<dbReference type="OrthoDB" id="9796300at2"/>
<dbReference type="Proteomes" id="UP000002671">
    <property type="component" value="Chromosome"/>
</dbReference>
<dbReference type="GO" id="GO:0000345">
    <property type="term" value="C:cytosolic DNA-directed RNA polymerase complex"/>
    <property type="evidence" value="ECO:0000318"/>
    <property type="project" value="GO_Central"/>
</dbReference>
<dbReference type="GO" id="GO:0001000">
    <property type="term" value="F:bacterial-type RNA polymerase core enzyme binding"/>
    <property type="evidence" value="ECO:0000318"/>
    <property type="project" value="GO_Central"/>
</dbReference>
<dbReference type="GO" id="GO:0003677">
    <property type="term" value="F:DNA binding"/>
    <property type="evidence" value="ECO:0007669"/>
    <property type="project" value="UniProtKB-UniRule"/>
</dbReference>
<dbReference type="GO" id="GO:0003899">
    <property type="term" value="F:DNA-directed RNA polymerase activity"/>
    <property type="evidence" value="ECO:0007669"/>
    <property type="project" value="UniProtKB-UniRule"/>
</dbReference>
<dbReference type="GO" id="GO:0006352">
    <property type="term" value="P:DNA-templated transcription initiation"/>
    <property type="evidence" value="ECO:0000318"/>
    <property type="project" value="GO_Central"/>
</dbReference>
<dbReference type="Gene3D" id="3.90.940.10">
    <property type="match status" value="1"/>
</dbReference>
<dbReference type="HAMAP" id="MF_00366">
    <property type="entry name" value="RNApol_bact_RpoZ"/>
    <property type="match status" value="1"/>
</dbReference>
<dbReference type="InterPro" id="IPR003716">
    <property type="entry name" value="DNA-dir_RNA_pol_omega"/>
</dbReference>
<dbReference type="InterPro" id="IPR006110">
    <property type="entry name" value="Pol_omega/Rpo6/RPB6"/>
</dbReference>
<dbReference type="InterPro" id="IPR036161">
    <property type="entry name" value="RPB6/omega-like_sf"/>
</dbReference>
<dbReference type="NCBIfam" id="TIGR00690">
    <property type="entry name" value="rpoZ"/>
    <property type="match status" value="1"/>
</dbReference>
<dbReference type="PANTHER" id="PTHR34476">
    <property type="entry name" value="DNA-DIRECTED RNA POLYMERASE SUBUNIT OMEGA"/>
    <property type="match status" value="1"/>
</dbReference>
<dbReference type="PANTHER" id="PTHR34476:SF1">
    <property type="entry name" value="DNA-DIRECTED RNA POLYMERASE SUBUNIT OMEGA"/>
    <property type="match status" value="1"/>
</dbReference>
<dbReference type="Pfam" id="PF01192">
    <property type="entry name" value="RNA_pol_Rpb6"/>
    <property type="match status" value="1"/>
</dbReference>
<dbReference type="SMART" id="SM01409">
    <property type="entry name" value="RNA_pol_Rpb6"/>
    <property type="match status" value="1"/>
</dbReference>
<dbReference type="SUPFAM" id="SSF63562">
    <property type="entry name" value="RPB6/omega subunit-like"/>
    <property type="match status" value="1"/>
</dbReference>
<gene>
    <name evidence="1" type="primary">rpoZ</name>
    <name type="ordered locus">CBU_0302</name>
</gene>
<keyword id="KW-0240">DNA-directed RNA polymerase</keyword>
<keyword id="KW-0548">Nucleotidyltransferase</keyword>
<keyword id="KW-1185">Reference proteome</keyword>
<keyword id="KW-0804">Transcription</keyword>
<keyword id="KW-0808">Transferase</keyword>
<evidence type="ECO:0000255" key="1">
    <source>
        <dbReference type="HAMAP-Rule" id="MF_00366"/>
    </source>
</evidence>